<protein>
    <recommendedName>
        <fullName evidence="3">Bifunctional lycopene cyclase/phytoene synthase</fullName>
    </recommendedName>
    <domain>
        <recommendedName>
            <fullName evidence="3">Lycopene beta-cyclase</fullName>
            <ecNumber evidence="2">5.5.1.19</ecNumber>
        </recommendedName>
        <alternativeName>
            <fullName evidence="3">Lycopene cyclase</fullName>
        </alternativeName>
    </domain>
    <domain>
        <recommendedName>
            <fullName evidence="3">Phytoene synthase</fullName>
            <ecNumber evidence="2">2.5.1.32</ecNumber>
        </recommendedName>
    </domain>
</protein>
<feature type="chain" id="PRO_0000409240" description="Bifunctional lycopene cyclase/phytoene synthase">
    <location>
        <begin position="1"/>
        <end position="602"/>
    </location>
</feature>
<feature type="transmembrane region" description="Helical" evidence="1">
    <location>
        <begin position="7"/>
        <end position="27"/>
    </location>
</feature>
<feature type="transmembrane region" description="Helical" evidence="1">
    <location>
        <begin position="35"/>
        <end position="55"/>
    </location>
</feature>
<feature type="transmembrane region" description="Helical" evidence="1">
    <location>
        <begin position="69"/>
        <end position="89"/>
    </location>
</feature>
<feature type="transmembrane region" description="Helical" evidence="1">
    <location>
        <begin position="110"/>
        <end position="130"/>
    </location>
</feature>
<feature type="transmembrane region" description="Helical" evidence="1">
    <location>
        <begin position="142"/>
        <end position="162"/>
    </location>
</feature>
<feature type="transmembrane region" description="Helical" evidence="1">
    <location>
        <begin position="173"/>
        <end position="193"/>
    </location>
</feature>
<feature type="transmembrane region" description="Helical" evidence="1">
    <location>
        <begin position="211"/>
        <end position="231"/>
    </location>
</feature>
<feature type="region of interest" description="Lycopene beta-cyclase" evidence="5">
    <location>
        <begin position="1"/>
        <end position="238"/>
    </location>
</feature>
<feature type="region of interest" description="Phytoene synthase" evidence="5">
    <location>
        <begin position="245"/>
        <end position="602"/>
    </location>
</feature>
<feature type="mutagenesis site" description="In carR23; abolishes lycopene cyclase activity, rich in lycopene and insensitive to retinol." evidence="2">
    <original>E</original>
    <variation>K</variation>
    <location>
        <position position="77"/>
    </location>
</feature>
<feature type="mutagenesis site" description="In carR21; abolishes lycopene cyclase activity, rich in lycopene and insensitive to retinol." evidence="2">
    <original>P</original>
    <variation>S</variation>
    <location>
        <position position="215"/>
    </location>
</feature>
<feature type="mutagenesis site" description="In carA113; reduces the response to chemical activation." evidence="2">
    <original>I</original>
    <variation>T</variation>
    <location>
        <position position="465"/>
    </location>
</feature>
<feature type="mutagenesis site" description="In carA5; abolishes phytoene synthase activity resulting in a 10- to 15-fold reduction of the beta-carotene content." evidence="2">
    <original>P</original>
    <variation>L</variation>
    <location>
        <position position="482"/>
    </location>
</feature>
<feature type="sequence conflict" description="In Ref. 2; CAB86388." evidence="4" ref="2">
    <original>A</original>
    <variation>G</variation>
    <location>
        <position position="436"/>
    </location>
</feature>
<evidence type="ECO:0000255" key="1"/>
<evidence type="ECO:0000269" key="2">
    <source>
    </source>
</evidence>
<evidence type="ECO:0000303" key="3">
    <source>
    </source>
</evidence>
<evidence type="ECO:0000305" key="4"/>
<evidence type="ECO:0000305" key="5">
    <source>
    </source>
</evidence>
<keyword id="KW-0125">Carotenoid biosynthesis</keyword>
<keyword id="KW-0413">Isomerase</keyword>
<keyword id="KW-0472">Membrane</keyword>
<keyword id="KW-0511">Multifunctional enzyme</keyword>
<keyword id="KW-0808">Transferase</keyword>
<keyword id="KW-0812">Transmembrane</keyword>
<keyword id="KW-1133">Transmembrane helix</keyword>
<gene>
    <name evidence="3" type="primary">carRA</name>
</gene>
<comment type="function">
    <text evidence="2">Bifunctional enzyme that catalyzes the reactions from geranylgeranyl diphosphate to phytoene (phytoene synthase) and lycopene to beta-carotene via the intermediate gamma-carotene (lycopene cyclase).</text>
</comment>
<comment type="catalytic activity">
    <reaction evidence="2">
        <text>all-trans-lycopene = gamma-carotene</text>
        <dbReference type="Rhea" id="RHEA:32219"/>
        <dbReference type="ChEBI" id="CHEBI:15948"/>
        <dbReference type="ChEBI" id="CHEBI:27740"/>
        <dbReference type="EC" id="5.5.1.19"/>
    </reaction>
</comment>
<comment type="catalytic activity">
    <reaction evidence="2">
        <text>gamma-carotene = all-trans-beta-carotene</text>
        <dbReference type="Rhea" id="RHEA:32239"/>
        <dbReference type="ChEBI" id="CHEBI:17579"/>
        <dbReference type="ChEBI" id="CHEBI:27740"/>
        <dbReference type="EC" id="5.5.1.19"/>
    </reaction>
</comment>
<comment type="catalytic activity">
    <reaction evidence="2">
        <text>2 (2E,6E,10E)-geranylgeranyl diphosphate = 15-cis-phytoene + 2 diphosphate</text>
        <dbReference type="Rhea" id="RHEA:34475"/>
        <dbReference type="ChEBI" id="CHEBI:27787"/>
        <dbReference type="ChEBI" id="CHEBI:33019"/>
        <dbReference type="ChEBI" id="CHEBI:58756"/>
        <dbReference type="EC" id="2.5.1.32"/>
    </reaction>
</comment>
<comment type="pathway">
    <text evidence="2">Carotenoid biosynthesis; beta-carotene biosynthesis.</text>
</comment>
<comment type="pathway">
    <text evidence="2">Carotenoid biosynthesis; phytoene biosynthesis; all-trans-phytoene from geranylgeranyl diphosphate: step 1/1.</text>
</comment>
<comment type="subcellular location">
    <subcellularLocation>
        <location evidence="4">Membrane</location>
        <topology evidence="4">Multi-pass membrane protein</topology>
    </subcellularLocation>
</comment>
<comment type="similarity">
    <text evidence="4">In the N-terminal section; belongs to the lycopene beta-cyclase family.</text>
</comment>
<comment type="similarity">
    <text evidence="4">In the C-terminal section; belongs to the phytoene/squalene synthase family.</text>
</comment>
<organism>
    <name type="scientific">Phycomyces blakesleeanus (strain ATCC 8743b / DSM 1359 / FGSC 10004 / NBRC 33097 / NRRL 1555)</name>
    <dbReference type="NCBI Taxonomy" id="763407"/>
    <lineage>
        <taxon>Eukaryota</taxon>
        <taxon>Fungi</taxon>
        <taxon>Fungi incertae sedis</taxon>
        <taxon>Mucoromycota</taxon>
        <taxon>Mucoromycotina</taxon>
        <taxon>Mucoromycetes</taxon>
        <taxon>Mucorales</taxon>
        <taxon>Phycomycetaceae</taxon>
        <taxon>Phycomyces</taxon>
    </lineage>
</organism>
<dbReference type="EC" id="5.5.1.19" evidence="2"/>
<dbReference type="EC" id="2.5.1.32" evidence="2"/>
<dbReference type="EMBL" id="AJ278287">
    <property type="protein sequence ID" value="CAB93661.1"/>
    <property type="molecule type" value="Genomic_DNA"/>
</dbReference>
<dbReference type="EMBL" id="AJ276965">
    <property type="protein sequence ID" value="CAB86388.1"/>
    <property type="molecule type" value="Genomic_DNA"/>
</dbReference>
<dbReference type="RefSeq" id="XP_018294563.1">
    <property type="nucleotide sequence ID" value="XM_018438264.1"/>
</dbReference>
<dbReference type="SMR" id="Q9P854"/>
<dbReference type="GeneID" id="28999170"/>
<dbReference type="VEuPathDB" id="FungiDB:PHYBLDRAFT_180114"/>
<dbReference type="OrthoDB" id="6600518at2759"/>
<dbReference type="UniPathway" id="UPA00799">
    <property type="reaction ID" value="UER00773"/>
</dbReference>
<dbReference type="UniPathway" id="UPA00802"/>
<dbReference type="GO" id="GO:0016020">
    <property type="term" value="C:membrane"/>
    <property type="evidence" value="ECO:0007669"/>
    <property type="project" value="UniProtKB-SubCell"/>
</dbReference>
<dbReference type="GO" id="GO:0046905">
    <property type="term" value="F:15-cis-phytoene synthase activity"/>
    <property type="evidence" value="ECO:0000315"/>
    <property type="project" value="UniProtKB"/>
</dbReference>
<dbReference type="GO" id="GO:0004311">
    <property type="term" value="F:geranylgeranyl diphosphate synthase activity"/>
    <property type="evidence" value="ECO:0007669"/>
    <property type="project" value="InterPro"/>
</dbReference>
<dbReference type="GO" id="GO:0016872">
    <property type="term" value="F:intramolecular lyase activity"/>
    <property type="evidence" value="ECO:0007669"/>
    <property type="project" value="InterPro"/>
</dbReference>
<dbReference type="GO" id="GO:0045436">
    <property type="term" value="F:lycopene beta cyclase activity"/>
    <property type="evidence" value="ECO:0000315"/>
    <property type="project" value="UniProtKB"/>
</dbReference>
<dbReference type="GO" id="GO:0051996">
    <property type="term" value="F:squalene synthase [NAD(P)H] activity"/>
    <property type="evidence" value="ECO:0007669"/>
    <property type="project" value="InterPro"/>
</dbReference>
<dbReference type="GO" id="GO:0016120">
    <property type="term" value="P:carotene biosynthetic process"/>
    <property type="evidence" value="ECO:0000315"/>
    <property type="project" value="UniProtKB"/>
</dbReference>
<dbReference type="GO" id="GO:0016117">
    <property type="term" value="P:carotenoid biosynthetic process"/>
    <property type="evidence" value="ECO:0007669"/>
    <property type="project" value="UniProtKB-KW"/>
</dbReference>
<dbReference type="CDD" id="cd00683">
    <property type="entry name" value="Trans_IPPS_HH"/>
    <property type="match status" value="1"/>
</dbReference>
<dbReference type="FunFam" id="1.10.600.10:FF:000020">
    <property type="entry name" value="Phytoene synthase"/>
    <property type="match status" value="1"/>
</dbReference>
<dbReference type="Gene3D" id="1.10.600.10">
    <property type="entry name" value="Farnesyl Diphosphate Synthase"/>
    <property type="match status" value="1"/>
</dbReference>
<dbReference type="InterPro" id="IPR008949">
    <property type="entry name" value="Isoprenoid_synthase_dom_sf"/>
</dbReference>
<dbReference type="InterPro" id="IPR017825">
    <property type="entry name" value="Lycopene_cyclase_dom"/>
</dbReference>
<dbReference type="InterPro" id="IPR002060">
    <property type="entry name" value="Squ/phyt_synthse"/>
</dbReference>
<dbReference type="InterPro" id="IPR019845">
    <property type="entry name" value="Squalene/phytoene_synthase_CS"/>
</dbReference>
<dbReference type="InterPro" id="IPR044843">
    <property type="entry name" value="Trans_IPPS_bact-type"/>
</dbReference>
<dbReference type="InterPro" id="IPR033904">
    <property type="entry name" value="Trans_IPPS_HH"/>
</dbReference>
<dbReference type="NCBIfam" id="TIGR03462">
    <property type="entry name" value="CarR_dom_SF"/>
    <property type="match status" value="2"/>
</dbReference>
<dbReference type="PANTHER" id="PTHR31480">
    <property type="entry name" value="BIFUNCTIONAL LYCOPENE CYCLASE/PHYTOENE SYNTHASE"/>
    <property type="match status" value="1"/>
</dbReference>
<dbReference type="Pfam" id="PF00494">
    <property type="entry name" value="SQS_PSY"/>
    <property type="match status" value="1"/>
</dbReference>
<dbReference type="SFLD" id="SFLDS00005">
    <property type="entry name" value="Isoprenoid_Synthase_Type_I"/>
    <property type="match status" value="1"/>
</dbReference>
<dbReference type="SFLD" id="SFLDG01212">
    <property type="entry name" value="Phytoene_synthase_like"/>
    <property type="match status" value="1"/>
</dbReference>
<dbReference type="SUPFAM" id="SSF48576">
    <property type="entry name" value="Terpenoid synthases"/>
    <property type="match status" value="1"/>
</dbReference>
<dbReference type="PROSITE" id="PS01045">
    <property type="entry name" value="SQUALEN_PHYTOEN_SYN_2"/>
    <property type="match status" value="1"/>
</dbReference>
<name>LCPS_PHYB8</name>
<reference key="1">
    <citation type="journal article" date="2001" name="Proc. Natl. Acad. Sci. U.S.A.">
        <title>A single gene for lycopene cyclase, phytoene synthase, and regulation of carotene biosynthesis in Phycomyces.</title>
        <authorList>
            <person name="Arrach N."/>
            <person name="Fernandez-Martin R."/>
            <person name="Cerda-Olmedo E."/>
            <person name="Avalos J."/>
        </authorList>
    </citation>
    <scope>NUCLEOTIDE SEQUENCE [GENOMIC DNA]</scope>
    <scope>MUTAGENESIS OF GLU-77; PRO-215; ILE-465 AND PRO-482</scope>
    <scope>FUNCTION</scope>
    <scope>CATALYTIC ACTIVITY</scope>
    <source>
        <strain>ATCC 8743b / DSM 1359 / FGSC 10004 / NBRC 33097 / NRRL 1555</strain>
    </source>
</reference>
<reference key="2">
    <citation type="submission" date="2000-04" db="EMBL/GenBank/DDBJ databases">
        <title>The carRA gene of Phycomyces blakesleeanus.</title>
        <authorList>
            <person name="Sanz C.S."/>
            <person name="Benito E.P."/>
            <person name="Eslava A.P."/>
        </authorList>
    </citation>
    <scope>NUCLEOTIDE SEQUENCE [GENOMIC DNA]</scope>
    <source>
        <strain>ATCC 8743b / DSM 1359 / FGSC 10004 / NBRC 33097 / NRRL 1555</strain>
    </source>
</reference>
<sequence length="602" mass="68670">MLTYMEVHLYFTLPVLALLAFLYKPFFTTKDRFKYIFLCTVAFATASPWDNYIVYHKAWSYCPECVTAVIGYVPLEEYMFFIIMTLITVTFTSLTMRWTLPSFFIRPETPVFQSVCVRYIPIVGFLTIAAKAWASSIPDSHPFYGACILWYVCPVLALLWIGSGEYMLRRWKAVLFSIAVPTIFLCWVDQYAIARGTWDISRRTSTGIMVLPSLPLEEFLFFLLIDTVLVFASCATDRAHAIVHIYITPMNHNKVSTWYMDFFYLCWAFLQTDQALSGETLSDLDATWRILREASASFYTASSVFSFEARQDLGVLYGFCRATDDLADNNDVSVPDRKKQLELVRGFVRQMFDSKHGHPDIDWTQYSGSIPDSFIAAFRSFTRLRDVLEIKAVEELLDGYTFDLEQREVKNEDDLVYYSACVASSVGEMCTRVLMASEPGGNRTMLKWTVERARDMGLALQLTNIARDIVTDSKQLGRSYVPRDWLTSQESALLKAGKARELGDERLRQIALKMVYTADDLNLMASRAIDYLPPSSRCGVRAACNVYTAIGVSLHKANGYPDRAHLTKLERMKVTFRCVYGFRKGHQGVQGDRGKSQAFTVI</sequence>
<proteinExistence type="evidence at protein level"/>
<accession>Q9P854</accession>
<accession>Q9P877</accession>